<feature type="chain" id="PRO_0000295690" description="Guanine nucleotide-binding protein-like 1">
    <location>
        <begin position="1"/>
        <end position="607"/>
    </location>
</feature>
<feature type="domain" description="CP-type G" evidence="4">
    <location>
        <begin position="178"/>
        <end position="418"/>
    </location>
</feature>
<feature type="region of interest" description="Disordered" evidence="5">
    <location>
        <begin position="1"/>
        <end position="81"/>
    </location>
</feature>
<feature type="region of interest" description="Disordered" evidence="5">
    <location>
        <begin position="547"/>
        <end position="607"/>
    </location>
</feature>
<feature type="compositionally biased region" description="Basic residues" evidence="5">
    <location>
        <begin position="1"/>
        <end position="14"/>
    </location>
</feature>
<feature type="compositionally biased region" description="Basic and acidic residues" evidence="5">
    <location>
        <begin position="15"/>
        <end position="26"/>
    </location>
</feature>
<feature type="compositionally biased region" description="Acidic residues" evidence="5">
    <location>
        <begin position="550"/>
        <end position="584"/>
    </location>
</feature>
<feature type="binding site" evidence="3">
    <location>
        <begin position="225"/>
        <end position="228"/>
    </location>
    <ligand>
        <name>GTP</name>
        <dbReference type="ChEBI" id="CHEBI:37565"/>
    </ligand>
</feature>
<feature type="binding site" evidence="3">
    <location>
        <begin position="367"/>
        <end position="374"/>
    </location>
    <ligand>
        <name>GTP</name>
        <dbReference type="ChEBI" id="CHEBI:37565"/>
    </ligand>
</feature>
<feature type="binding site" evidence="3">
    <location>
        <begin position="411"/>
        <end position="415"/>
    </location>
    <ligand>
        <name>GTP</name>
        <dbReference type="ChEBI" id="CHEBI:37565"/>
    </ligand>
</feature>
<feature type="modified residue" description="Phosphoserine" evidence="2">
    <location>
        <position position="32"/>
    </location>
</feature>
<feature type="modified residue" description="Phosphoserine" evidence="2">
    <location>
        <position position="33"/>
    </location>
</feature>
<feature type="modified residue" description="Phosphoserine" evidence="2">
    <location>
        <position position="34"/>
    </location>
</feature>
<feature type="modified residue" description="Phosphothreonine" evidence="2">
    <location>
        <position position="48"/>
    </location>
</feature>
<feature type="modified residue" description="Phosphothreonine" evidence="2">
    <location>
        <position position="50"/>
    </location>
</feature>
<feature type="modified residue" description="Phosphoserine" evidence="2">
    <location>
        <position position="51"/>
    </location>
</feature>
<feature type="modified residue" description="Phosphoserine" evidence="2">
    <location>
        <position position="68"/>
    </location>
</feature>
<feature type="modified residue" description="Phosphoserine" evidence="2">
    <location>
        <position position="324"/>
    </location>
</feature>
<feature type="modified residue" description="Phosphoserine" evidence="2">
    <location>
        <position position="561"/>
    </location>
</feature>
<feature type="modified residue" description="Phosphoserine" evidence="2">
    <location>
        <position position="562"/>
    </location>
</feature>
<feature type="modified residue" description="Phosphoserine" evidence="2">
    <location>
        <position position="563"/>
    </location>
</feature>
<name>GNL1_PONAB</name>
<keyword id="KW-0342">GTP-binding</keyword>
<keyword id="KW-0547">Nucleotide-binding</keyword>
<keyword id="KW-0597">Phosphoprotein</keyword>
<keyword id="KW-1185">Reference proteome</keyword>
<dbReference type="EMBL" id="CR859219">
    <property type="protein sequence ID" value="CAH91403.1"/>
    <property type="molecule type" value="mRNA"/>
</dbReference>
<dbReference type="RefSeq" id="NP_001125827.1">
    <property type="nucleotide sequence ID" value="NM_001132355.1"/>
</dbReference>
<dbReference type="FunCoup" id="Q5RA07">
    <property type="interactions" value="1346"/>
</dbReference>
<dbReference type="STRING" id="9601.ENSPPYP00000018342"/>
<dbReference type="Ensembl" id="ENSPPYT00000019076.2">
    <property type="protein sequence ID" value="ENSPPYP00000018342.1"/>
    <property type="gene ID" value="ENSPPYG00000016408.2"/>
</dbReference>
<dbReference type="GeneID" id="100172755"/>
<dbReference type="KEGG" id="pon:100172755"/>
<dbReference type="CTD" id="2794"/>
<dbReference type="eggNOG" id="KOG1424">
    <property type="taxonomic scope" value="Eukaryota"/>
</dbReference>
<dbReference type="GeneTree" id="ENSGT00940000158047"/>
<dbReference type="HOGENOM" id="CLU_013649_1_1_1"/>
<dbReference type="InParanoid" id="Q5RA07"/>
<dbReference type="OMA" id="CDFPVRP"/>
<dbReference type="OrthoDB" id="391988at2759"/>
<dbReference type="TreeFam" id="TF324569"/>
<dbReference type="Proteomes" id="UP000001595">
    <property type="component" value="Chromosome 6"/>
</dbReference>
<dbReference type="GO" id="GO:0005525">
    <property type="term" value="F:GTP binding"/>
    <property type="evidence" value="ECO:0007669"/>
    <property type="project" value="UniProtKB-KW"/>
</dbReference>
<dbReference type="GO" id="GO:0003924">
    <property type="term" value="F:GTPase activity"/>
    <property type="evidence" value="ECO:0007669"/>
    <property type="project" value="InterPro"/>
</dbReference>
<dbReference type="GO" id="GO:0006974">
    <property type="term" value="P:DNA damage response"/>
    <property type="evidence" value="ECO:0007669"/>
    <property type="project" value="Ensembl"/>
</dbReference>
<dbReference type="CDD" id="cd01857">
    <property type="entry name" value="HSR1_MMR1"/>
    <property type="match status" value="1"/>
</dbReference>
<dbReference type="Gene3D" id="3.40.50.300">
    <property type="entry name" value="P-loop containing nucleotide triphosphate hydrolases"/>
    <property type="match status" value="1"/>
</dbReference>
<dbReference type="InterPro" id="IPR030378">
    <property type="entry name" value="G_CP_dom"/>
</dbReference>
<dbReference type="InterPro" id="IPR043358">
    <property type="entry name" value="GNL1-like"/>
</dbReference>
<dbReference type="InterPro" id="IPR006073">
    <property type="entry name" value="GTP-bd"/>
</dbReference>
<dbReference type="InterPro" id="IPR027417">
    <property type="entry name" value="P-loop_NTPase"/>
</dbReference>
<dbReference type="PANTHER" id="PTHR45709:SF3">
    <property type="entry name" value="GUANINE NUCLEOTIDE-BINDING PROTEIN-LIKE 1"/>
    <property type="match status" value="1"/>
</dbReference>
<dbReference type="PANTHER" id="PTHR45709">
    <property type="entry name" value="LARGE SUBUNIT GTPASE 1 HOMOLOG-RELATED"/>
    <property type="match status" value="1"/>
</dbReference>
<dbReference type="Pfam" id="PF01926">
    <property type="entry name" value="MMR_HSR1"/>
    <property type="match status" value="1"/>
</dbReference>
<dbReference type="SUPFAM" id="SSF52540">
    <property type="entry name" value="P-loop containing nucleoside triphosphate hydrolases"/>
    <property type="match status" value="1"/>
</dbReference>
<dbReference type="PROSITE" id="PS51721">
    <property type="entry name" value="G_CP"/>
    <property type="match status" value="1"/>
</dbReference>
<gene>
    <name type="primary">GNL1</name>
</gene>
<evidence type="ECO:0000250" key="1"/>
<evidence type="ECO:0000250" key="2">
    <source>
        <dbReference type="UniProtKB" id="P36915"/>
    </source>
</evidence>
<evidence type="ECO:0000255" key="3"/>
<evidence type="ECO:0000255" key="4">
    <source>
        <dbReference type="PROSITE-ProRule" id="PRU01058"/>
    </source>
</evidence>
<evidence type="ECO:0000256" key="5">
    <source>
        <dbReference type="SAM" id="MobiDB-lite"/>
    </source>
</evidence>
<protein>
    <recommendedName>
        <fullName>Guanine nucleotide-binding protein-like 1</fullName>
    </recommendedName>
</protein>
<proteinExistence type="evidence at transcript level"/>
<organism>
    <name type="scientific">Pongo abelii</name>
    <name type="common">Sumatran orangutan</name>
    <name type="synonym">Pongo pygmaeus abelii</name>
    <dbReference type="NCBI Taxonomy" id="9601"/>
    <lineage>
        <taxon>Eukaryota</taxon>
        <taxon>Metazoa</taxon>
        <taxon>Chordata</taxon>
        <taxon>Craniata</taxon>
        <taxon>Vertebrata</taxon>
        <taxon>Euteleostomi</taxon>
        <taxon>Mammalia</taxon>
        <taxon>Eutheria</taxon>
        <taxon>Euarchontoglires</taxon>
        <taxon>Primates</taxon>
        <taxon>Haplorrhini</taxon>
        <taxon>Catarrhini</taxon>
        <taxon>Hominidae</taxon>
        <taxon>Pongo</taxon>
    </lineage>
</organism>
<comment type="function">
    <text evidence="1">Possible regulatory or functional link with the histocompatibility cluster.</text>
</comment>
<comment type="domain">
    <text>In contrast to other GTP-binding proteins, this family is characterized by a circular permutation of the GTPase motifs described by a G4-G1-G3 pattern.</text>
</comment>
<comment type="similarity">
    <text evidence="4">Belongs to the TRAFAC class YlqF/YawG GTPase family.</text>
</comment>
<reference key="1">
    <citation type="submission" date="2004-11" db="EMBL/GenBank/DDBJ databases">
        <authorList>
            <consortium name="The German cDNA consortium"/>
        </authorList>
    </citation>
    <scope>NUCLEOTIDE SEQUENCE [LARGE SCALE MRNA]</scope>
    <source>
        <tissue>Brain cortex</tissue>
    </source>
</reference>
<accession>Q5RA07</accession>
<sequence length="607" mass="68675">MPRKKPFSVKQKKKQLQDKRERKRGLQDGLRSSSNSRSGSRERREEQTDTSDGESVTHHIRRLNQQPSQGLGPRGYDPNRYRLHFERDSREEVERRKRAAREQVLQPVSAEVLELDIREVYQPGSVLDFPRRPPWSYEMSKEQLMSQEERSFQEYLGKIHGAYSSEKLSYFEHNLETWRQLWRVLEMSDIVLLITDIRHPVVNFPPALYEYVTGELGLALVLVLNKVDLAPPALVVAWKHYFHQHYPQLHVVLFTSFPRDPRTPQDPSSVLKKSRRRGRGWTRALGPEQLLRACEAITVGKVDLSSWREKIARDVAGATWGNGSGEEEEEEDGPAVLVEQQTDSAMEPTGPTRERYKDGVVTIGCVGFPNVGKSSLINGLVGRKVVSVSRTPGHTRYFQTYFLTPSVKLCDCPGLIFPSLLPRQLQVLAGIYPIAQIQEPYTAVGYLASRIPVQALLHLRHPEAEDPSAEHPWCAWDICEAWAEKRGYKTAKAARNDVYRAANSLLRLAVDGRLSLCFHPPGYSEQKGTWESHPETTELVVLQGRVGPAGDEEEEEEEELSSSCEEEGEEDRDADEEGEGDEDTPTSAPGSSLAGRNPYALLGEDEC</sequence>